<evidence type="ECO:0000255" key="1">
    <source>
        <dbReference type="HAMAP-Rule" id="MF_00469"/>
    </source>
</evidence>
<name>TRHO_STAAN</name>
<organism>
    <name type="scientific">Staphylococcus aureus (strain N315)</name>
    <dbReference type="NCBI Taxonomy" id="158879"/>
    <lineage>
        <taxon>Bacteria</taxon>
        <taxon>Bacillati</taxon>
        <taxon>Bacillota</taxon>
        <taxon>Bacilli</taxon>
        <taxon>Bacillales</taxon>
        <taxon>Staphylococcaceae</taxon>
        <taxon>Staphylococcus</taxon>
    </lineage>
</organism>
<dbReference type="EC" id="1.14.-.-" evidence="1"/>
<dbReference type="EMBL" id="BA000018">
    <property type="protein sequence ID" value="BAB43787.1"/>
    <property type="molecule type" value="Genomic_DNA"/>
</dbReference>
<dbReference type="PIR" id="A99978">
    <property type="entry name" value="A99978"/>
</dbReference>
<dbReference type="RefSeq" id="WP_001109281.1">
    <property type="nucleotide sequence ID" value="NC_002745.2"/>
</dbReference>
<dbReference type="SMR" id="P67327"/>
<dbReference type="EnsemblBacteria" id="BAB43787">
    <property type="protein sequence ID" value="BAB43787"/>
    <property type="gene ID" value="BAB43787"/>
</dbReference>
<dbReference type="KEGG" id="sau:SA2481"/>
<dbReference type="HOGENOM" id="CLU_038878_1_0_9"/>
<dbReference type="GO" id="GO:0016705">
    <property type="term" value="F:oxidoreductase activity, acting on paired donors, with incorporation or reduction of molecular oxygen"/>
    <property type="evidence" value="ECO:0007669"/>
    <property type="project" value="UniProtKB-UniRule"/>
</dbReference>
<dbReference type="GO" id="GO:0006400">
    <property type="term" value="P:tRNA modification"/>
    <property type="evidence" value="ECO:0007669"/>
    <property type="project" value="UniProtKB-UniRule"/>
</dbReference>
<dbReference type="CDD" id="cd01518">
    <property type="entry name" value="RHOD_YceA"/>
    <property type="match status" value="1"/>
</dbReference>
<dbReference type="Gene3D" id="3.30.70.100">
    <property type="match status" value="1"/>
</dbReference>
<dbReference type="Gene3D" id="3.40.250.10">
    <property type="entry name" value="Rhodanese-like domain"/>
    <property type="match status" value="1"/>
</dbReference>
<dbReference type="HAMAP" id="MF_00469">
    <property type="entry name" value="TrhO"/>
    <property type="match status" value="1"/>
</dbReference>
<dbReference type="InterPro" id="IPR001763">
    <property type="entry name" value="Rhodanese-like_dom"/>
</dbReference>
<dbReference type="InterPro" id="IPR036873">
    <property type="entry name" value="Rhodanese-like_dom_sf"/>
</dbReference>
<dbReference type="InterPro" id="IPR022111">
    <property type="entry name" value="Rhodanese_C"/>
</dbReference>
<dbReference type="InterPro" id="IPR020936">
    <property type="entry name" value="TrhO"/>
</dbReference>
<dbReference type="InterPro" id="IPR040503">
    <property type="entry name" value="TRHO_N"/>
</dbReference>
<dbReference type="NCBIfam" id="NF001135">
    <property type="entry name" value="PRK00142.1-3"/>
    <property type="match status" value="1"/>
</dbReference>
<dbReference type="PANTHER" id="PTHR43268:SF3">
    <property type="entry name" value="RHODANESE-LIKE DOMAIN-CONTAINING PROTEIN 7-RELATED"/>
    <property type="match status" value="1"/>
</dbReference>
<dbReference type="PANTHER" id="PTHR43268">
    <property type="entry name" value="THIOSULFATE SULFURTRANSFERASE/RHODANESE-LIKE DOMAIN-CONTAINING PROTEIN 2"/>
    <property type="match status" value="1"/>
</dbReference>
<dbReference type="Pfam" id="PF00581">
    <property type="entry name" value="Rhodanese"/>
    <property type="match status" value="1"/>
</dbReference>
<dbReference type="Pfam" id="PF12368">
    <property type="entry name" value="Rhodanese_C"/>
    <property type="match status" value="1"/>
</dbReference>
<dbReference type="Pfam" id="PF17773">
    <property type="entry name" value="UPF0176_N"/>
    <property type="match status" value="1"/>
</dbReference>
<dbReference type="SMART" id="SM00450">
    <property type="entry name" value="RHOD"/>
    <property type="match status" value="1"/>
</dbReference>
<dbReference type="SUPFAM" id="SSF52821">
    <property type="entry name" value="Rhodanese/Cell cycle control phosphatase"/>
    <property type="match status" value="1"/>
</dbReference>
<dbReference type="PROSITE" id="PS50206">
    <property type="entry name" value="RHODANESE_3"/>
    <property type="match status" value="1"/>
</dbReference>
<comment type="function">
    <text evidence="1">Catalyzes oxygen-dependent 5-hydroxyuridine (ho5U) modification at position 34 in tRNAs.</text>
</comment>
<comment type="catalytic activity">
    <reaction evidence="1">
        <text>uridine(34) in tRNA + AH2 + O2 = 5-hydroxyuridine(34) in tRNA + A + H2O</text>
        <dbReference type="Rhea" id="RHEA:64224"/>
        <dbReference type="Rhea" id="RHEA-COMP:11727"/>
        <dbReference type="Rhea" id="RHEA-COMP:13381"/>
        <dbReference type="ChEBI" id="CHEBI:13193"/>
        <dbReference type="ChEBI" id="CHEBI:15377"/>
        <dbReference type="ChEBI" id="CHEBI:15379"/>
        <dbReference type="ChEBI" id="CHEBI:17499"/>
        <dbReference type="ChEBI" id="CHEBI:65315"/>
        <dbReference type="ChEBI" id="CHEBI:136877"/>
    </reaction>
</comment>
<comment type="similarity">
    <text evidence="1">Belongs to the TrhO family.</text>
</comment>
<feature type="chain" id="PRO_0000161515" description="tRNA uridine(34) hydroxylase">
    <location>
        <begin position="1"/>
        <end position="318"/>
    </location>
</feature>
<feature type="domain" description="Rhodanese" evidence="1">
    <location>
        <begin position="123"/>
        <end position="217"/>
    </location>
</feature>
<feature type="active site" description="Cysteine persulfide intermediate" evidence="1">
    <location>
        <position position="177"/>
    </location>
</feature>
<accession>P67327</accession>
<accession>Q99QV2</accession>
<gene>
    <name evidence="1" type="primary">trhO</name>
    <name type="ordered locus">SA2481</name>
</gene>
<protein>
    <recommendedName>
        <fullName evidence="1">tRNA uridine(34) hydroxylase</fullName>
        <ecNumber evidence="1">1.14.-.-</ecNumber>
    </recommendedName>
    <alternativeName>
        <fullName evidence="1">tRNA hydroxylation protein O</fullName>
    </alternativeName>
</protein>
<reference key="1">
    <citation type="journal article" date="2001" name="Lancet">
        <title>Whole genome sequencing of meticillin-resistant Staphylococcus aureus.</title>
        <authorList>
            <person name="Kuroda M."/>
            <person name="Ohta T."/>
            <person name="Uchiyama I."/>
            <person name="Baba T."/>
            <person name="Yuzawa H."/>
            <person name="Kobayashi I."/>
            <person name="Cui L."/>
            <person name="Oguchi A."/>
            <person name="Aoki K."/>
            <person name="Nagai Y."/>
            <person name="Lian J.-Q."/>
            <person name="Ito T."/>
            <person name="Kanamori M."/>
            <person name="Matsumaru H."/>
            <person name="Maruyama A."/>
            <person name="Murakami H."/>
            <person name="Hosoyama A."/>
            <person name="Mizutani-Ui Y."/>
            <person name="Takahashi N.K."/>
            <person name="Sawano T."/>
            <person name="Inoue R."/>
            <person name="Kaito C."/>
            <person name="Sekimizu K."/>
            <person name="Hirakawa H."/>
            <person name="Kuhara S."/>
            <person name="Goto S."/>
            <person name="Yabuzaki J."/>
            <person name="Kanehisa M."/>
            <person name="Yamashita A."/>
            <person name="Oshima K."/>
            <person name="Furuya K."/>
            <person name="Yoshino C."/>
            <person name="Shiba T."/>
            <person name="Hattori M."/>
            <person name="Ogasawara N."/>
            <person name="Hayashi H."/>
            <person name="Hiramatsu K."/>
        </authorList>
    </citation>
    <scope>NUCLEOTIDE SEQUENCE [LARGE SCALE GENOMIC DNA]</scope>
    <source>
        <strain>N315</strain>
    </source>
</reference>
<sequence>MNYQVLLYYKYTTIDDPEQFAQDHLAFCKAHHLKGRILVSTEGINGTLSGTKEETEQYMAHMHADERFKDMVFKIDEAEGHAFKKMHVRPRKEIVALDLEDDVDPRHTTGQYLSPVEFRKALEDDDTVIIDARNDYEFDLGHFRGAIRPDITRFRDLPDWIKENKALFTDKKVVTYCTGGIRCEKFSGWLLKEGFEDVAQLHGGIATYGKDPETKGQYWDGKMYVFDDRISVDINQVEKTIIGKDWFDGKPCERYINCANPECNKQILVSEENETKYLGACSYECAKHERNRYVQANNISDNEWQQRLTNFDDLHQHA</sequence>
<keyword id="KW-0560">Oxidoreductase</keyword>
<keyword id="KW-0819">tRNA processing</keyword>
<proteinExistence type="inferred from homology"/>